<sequence length="370" mass="40573">MAAERQEALREFVAVTGAEEDRARFFLESAGWDLQIALASFYEDGGDEDIVTISQATPSSVSRGTAPSDNRVTSFRDLIHDQDEDEEEEEGQRFYAGGSERSGQQIVGPPRKKSPNELVDDLFKGAKEHGAVAVERVTKSPGETSKPRPFAGGGYRLGAAPEEESAYVAGEKRQHSSQDVHVVLKLWKSGFSLDNGELRSYQDPSNAQFLESIRRGEVPAELRRLAHGGQVNLDMEDHRDEDFVKPKGAFKAFTGEGQKLGSTAPQVLSTSSPAQQAENEAKASSSILIDESEPTTNIQIRLADGGRLVQKFNHSHRISDIRLFIVDARPAMAATSFILMTTFPNKELADESQTLKEANLLNAVIVQRLT</sequence>
<proteinExistence type="evidence at protein level"/>
<name>NSF1C_HUMAN</name>
<gene>
    <name type="primary">NSFL1C</name>
    <name type="synonym">UBXN2C</name>
</gene>
<comment type="function">
    <text evidence="2 8 9">Reduces the ATPase activity of VCP (By similarity). Necessary for the fragmentation of Golgi stacks during mitosis and for VCP-mediated reassembly of Golgi stacks after mitosis (By similarity). May play a role in VCP-mediated formation of transitional endoplasmic reticulum (tER) (By similarity). Inhibits the activity of CTSL (in vitro) (PubMed:15498563). Together with UBXN2B/p37, regulates the centrosomal levels of kinase AURKA/Aurora A during mitotic progression by promoting AURKA removal from centrosomes in prophase (PubMed:23649807). Also, regulates spindle orientation during mitosis (PubMed:23649807).</text>
</comment>
<comment type="subunit">
    <text evidence="1">Part of a ternary complex containing STX5A, NSFL1C and VCP. NSFL1C forms a homotrimer that binds to one end of a VCP homohexamer. The complex binds to membranes enriched in phosphatidylethanolamine-containing lipids and promotes Golgi membrane fusion. Interaction with VCIP135 leads to dissociation of the complex via ATP hydrolysis by VCP. Binds ubiquitin and mono-ubiquitinated proteins via its N-terminal UBA-like domain when bound to VCP (By similarity).</text>
</comment>
<comment type="interaction">
    <interactant intactId="EBI-721577">
        <id>Q9UNZ2</id>
    </interactant>
    <interactant intactId="EBI-372899">
        <id>Q13148</id>
        <label>TARDBP</label>
    </interactant>
    <organismsDiffer>false</organismsDiffer>
    <experiments>4</experiments>
</comment>
<comment type="interaction">
    <interactant intactId="EBI-721577">
        <id>Q9UNZ2</id>
    </interactant>
    <interactant intactId="EBI-355164">
        <id>P55072</id>
        <label>VCP</label>
    </interactant>
    <organismsDiffer>false</organismsDiffer>
    <experiments>26</experiments>
</comment>
<comment type="subcellular location">
    <subcellularLocation>
        <location evidence="2">Nucleus</location>
    </subcellularLocation>
    <subcellularLocation>
        <location evidence="2">Golgi apparatus</location>
        <location evidence="2">Golgi stack</location>
    </subcellularLocation>
    <subcellularLocation>
        <location evidence="2">Chromosome</location>
    </subcellularLocation>
    <subcellularLocation>
        <location evidence="2">Cytoplasm</location>
        <location evidence="2">Cytoskeleton</location>
        <location evidence="2">Microtubule organizing center</location>
        <location evidence="2">Centrosome</location>
    </subcellularLocation>
    <text evidence="2">Predominantly nuclear in interphase cells. Bound to the axial elements of sex chromosomes in pachytene spermatocytes. A small proportion of the protein is cytoplasmic, associated with Golgi stacks. Localizes to centrosome during mitotic prophase and metaphase.</text>
</comment>
<comment type="alternative products">
    <event type="alternative splicing"/>
    <isoform>
        <id>Q9UNZ2-1</id>
        <name>1</name>
        <sequence type="displayed"/>
    </isoform>
    <isoform>
        <id>Q9UNZ2-4</id>
        <name>2</name>
        <sequence type="described" ref="VSP_009263"/>
    </isoform>
    <isoform>
        <id>Q9UNZ2-5</id>
        <name>3</name>
        <sequence type="described" ref="VSP_009262"/>
    </isoform>
    <isoform>
        <id>Q9UNZ2-6</id>
        <name>4</name>
        <sequence type="described" ref="VSP_041062"/>
    </isoform>
</comment>
<comment type="PTM">
    <text evidence="1">Phosphorylated during mitosis. Phosphorylation inhibits interaction with Golgi membranes and is required for the fragmentation of the Golgi stacks during mitosis (By similarity).</text>
</comment>
<comment type="similarity">
    <text evidence="12">Belongs to the NSFL1C family.</text>
</comment>
<comment type="sequence caution" evidence="12">
    <conflict type="frameshift">
        <sequence resource="EMBL-CDS" id="AAF17199"/>
    </conflict>
</comment>
<comment type="sequence caution" evidence="12">
    <conflict type="miscellaneous discrepancy">
        <sequence resource="EMBL-CDS" id="AAF17199"/>
    </conflict>
    <text>Sequencing errors.</text>
</comment>
<dbReference type="EMBL" id="AF086909">
    <property type="protein sequence ID" value="AAP97139.1"/>
    <property type="molecule type" value="mRNA"/>
</dbReference>
<dbReference type="EMBL" id="AF112211">
    <property type="protein sequence ID" value="AAF17199.1"/>
    <property type="status" value="ALT_SEQ"/>
    <property type="molecule type" value="mRNA"/>
</dbReference>
<dbReference type="EMBL" id="AF078856">
    <property type="protein sequence ID" value="AAD44488.1"/>
    <property type="molecule type" value="mRNA"/>
</dbReference>
<dbReference type="EMBL" id="AK297403">
    <property type="protein sequence ID" value="BAG59842.1"/>
    <property type="molecule type" value="mRNA"/>
</dbReference>
<dbReference type="EMBL" id="AK001511">
    <property type="protein sequence ID" value="BAA91731.1"/>
    <property type="molecule type" value="mRNA"/>
</dbReference>
<dbReference type="EMBL" id="AK315433">
    <property type="protein sequence ID" value="BAG37821.1"/>
    <property type="molecule type" value="mRNA"/>
</dbReference>
<dbReference type="EMBL" id="AL109658">
    <property type="status" value="NOT_ANNOTATED_CDS"/>
    <property type="molecule type" value="Genomic_DNA"/>
</dbReference>
<dbReference type="EMBL" id="CH471133">
    <property type="protein sequence ID" value="EAX10629.1"/>
    <property type="molecule type" value="Genomic_DNA"/>
</dbReference>
<dbReference type="EMBL" id="CH471133">
    <property type="protein sequence ID" value="EAX10631.1"/>
    <property type="molecule type" value="Genomic_DNA"/>
</dbReference>
<dbReference type="EMBL" id="BC002801">
    <property type="protein sequence ID" value="AAH02801.1"/>
    <property type="molecule type" value="mRNA"/>
</dbReference>
<dbReference type="CCDS" id="CCDS13015.1">
    <molecule id="Q9UNZ2-1"/>
</dbReference>
<dbReference type="CCDS" id="CCDS13016.1">
    <molecule id="Q9UNZ2-4"/>
</dbReference>
<dbReference type="CCDS" id="CCDS56175.1">
    <molecule id="Q9UNZ2-5"/>
</dbReference>
<dbReference type="RefSeq" id="NP_001193665.1">
    <molecule id="Q9UNZ2-5"/>
    <property type="nucleotide sequence ID" value="NM_001206736.2"/>
</dbReference>
<dbReference type="RefSeq" id="NP_057227.2">
    <molecule id="Q9UNZ2-1"/>
    <property type="nucleotide sequence ID" value="NM_016143.4"/>
</dbReference>
<dbReference type="RefSeq" id="NP_061327.2">
    <molecule id="Q9UNZ2-4"/>
    <property type="nucleotide sequence ID" value="NM_018839.4"/>
</dbReference>
<dbReference type="RefSeq" id="XP_006723657.1">
    <property type="nucleotide sequence ID" value="XM_006723594.2"/>
</dbReference>
<dbReference type="RefSeq" id="XP_047296262.1">
    <molecule id="Q9UNZ2-6"/>
    <property type="nucleotide sequence ID" value="XM_047440306.1"/>
</dbReference>
<dbReference type="RefSeq" id="XP_047296263.1">
    <molecule id="Q9UNZ2-6"/>
    <property type="nucleotide sequence ID" value="XM_047440307.1"/>
</dbReference>
<dbReference type="RefSeq" id="XP_054179694.1">
    <molecule id="Q9UNZ2-6"/>
    <property type="nucleotide sequence ID" value="XM_054323719.1"/>
</dbReference>
<dbReference type="RefSeq" id="XP_054179695.1">
    <molecule id="Q9UNZ2-6"/>
    <property type="nucleotide sequence ID" value="XM_054323720.1"/>
</dbReference>
<dbReference type="PDB" id="1SS6">
    <property type="method" value="NMR"/>
    <property type="chains" value="A=171-270"/>
</dbReference>
<dbReference type="PDB" id="8HRZ">
    <property type="method" value="X-ray"/>
    <property type="resolution" value="2.70 A"/>
    <property type="chains" value="M/N/O/P/Q/R/S/T/U/V/W/X=287-370"/>
</dbReference>
<dbReference type="PDBsum" id="1SS6"/>
<dbReference type="PDBsum" id="8HRZ"/>
<dbReference type="BMRB" id="Q9UNZ2"/>
<dbReference type="EMDB" id="EMD-15774"/>
<dbReference type="EMDB" id="EMD-15778"/>
<dbReference type="EMDB" id="EMD-15846"/>
<dbReference type="EMDB" id="EMD-15847"/>
<dbReference type="SMR" id="Q9UNZ2"/>
<dbReference type="BioGRID" id="121014">
    <property type="interactions" value="181"/>
</dbReference>
<dbReference type="ComplexPortal" id="CPX-262">
    <property type="entry name" value="VCP-NSFL1C AAA ATPase complex"/>
</dbReference>
<dbReference type="DIP" id="DIP-39611N"/>
<dbReference type="FunCoup" id="Q9UNZ2">
    <property type="interactions" value="4018"/>
</dbReference>
<dbReference type="IntAct" id="Q9UNZ2">
    <property type="interactions" value="66"/>
</dbReference>
<dbReference type="MINT" id="Q9UNZ2"/>
<dbReference type="STRING" id="9606.ENSP00000418529"/>
<dbReference type="GlyGen" id="Q9UNZ2">
    <property type="glycosylation" value="1 site, 1 O-linked glycan (1 site)"/>
</dbReference>
<dbReference type="iPTMnet" id="Q9UNZ2"/>
<dbReference type="MetOSite" id="Q9UNZ2"/>
<dbReference type="PhosphoSitePlus" id="Q9UNZ2"/>
<dbReference type="BioMuta" id="NSFL1C"/>
<dbReference type="DMDM" id="41017512"/>
<dbReference type="REPRODUCTION-2DPAGE" id="IPI00100197"/>
<dbReference type="CPTAC" id="CPTAC-101"/>
<dbReference type="CPTAC" id="CPTAC-102"/>
<dbReference type="jPOST" id="Q9UNZ2"/>
<dbReference type="MassIVE" id="Q9UNZ2"/>
<dbReference type="PaxDb" id="9606-ENSP00000418529"/>
<dbReference type="PeptideAtlas" id="Q9UNZ2"/>
<dbReference type="ProteomicsDB" id="85346">
    <molecule id="Q9UNZ2-1"/>
</dbReference>
<dbReference type="ProteomicsDB" id="85347">
    <molecule id="Q9UNZ2-4"/>
</dbReference>
<dbReference type="ProteomicsDB" id="85348">
    <molecule id="Q9UNZ2-5"/>
</dbReference>
<dbReference type="ProteomicsDB" id="85349">
    <molecule id="Q9UNZ2-6"/>
</dbReference>
<dbReference type="Pumba" id="Q9UNZ2"/>
<dbReference type="TopDownProteomics" id="Q9UNZ2-1">
    <molecule id="Q9UNZ2-1"/>
</dbReference>
<dbReference type="TopDownProteomics" id="Q9UNZ2-4">
    <molecule id="Q9UNZ2-4"/>
</dbReference>
<dbReference type="TopDownProteomics" id="Q9UNZ2-5">
    <molecule id="Q9UNZ2-5"/>
</dbReference>
<dbReference type="ABCD" id="Q9UNZ2">
    <property type="antibodies" value="5 sequenced antibodies"/>
</dbReference>
<dbReference type="Antibodypedia" id="23083">
    <property type="antibodies" value="112 antibodies from 27 providers"/>
</dbReference>
<dbReference type="DNASU" id="55968"/>
<dbReference type="Ensembl" id="ENST00000216879.9">
    <molecule id="Q9UNZ2-1"/>
    <property type="protein sequence ID" value="ENSP00000216879.4"/>
    <property type="gene ID" value="ENSG00000088833.18"/>
</dbReference>
<dbReference type="Ensembl" id="ENST00000353088.6">
    <molecule id="Q9UNZ2-4"/>
    <property type="protein sequence ID" value="ENSP00000338643.2"/>
    <property type="gene ID" value="ENSG00000088833.18"/>
</dbReference>
<dbReference type="Ensembl" id="ENST00000476071.5">
    <molecule id="Q9UNZ2-5"/>
    <property type="protein sequence ID" value="ENSP00000418529.1"/>
    <property type="gene ID" value="ENSG00000088833.18"/>
</dbReference>
<dbReference type="GeneID" id="55968"/>
<dbReference type="KEGG" id="hsa:55968"/>
<dbReference type="MANE-Select" id="ENST00000216879.9">
    <property type="protein sequence ID" value="ENSP00000216879.4"/>
    <property type="RefSeq nucleotide sequence ID" value="NM_016143.5"/>
    <property type="RefSeq protein sequence ID" value="NP_057227.2"/>
</dbReference>
<dbReference type="UCSC" id="uc002wfc.3">
    <molecule id="Q9UNZ2-1"/>
    <property type="organism name" value="human"/>
</dbReference>
<dbReference type="AGR" id="HGNC:15912"/>
<dbReference type="CTD" id="55968"/>
<dbReference type="DisGeNET" id="55968"/>
<dbReference type="GeneCards" id="NSFL1C"/>
<dbReference type="HGNC" id="HGNC:15912">
    <property type="gene designation" value="NSFL1C"/>
</dbReference>
<dbReference type="HPA" id="ENSG00000088833">
    <property type="expression patterns" value="Low tissue specificity"/>
</dbReference>
<dbReference type="MIM" id="606610">
    <property type="type" value="gene"/>
</dbReference>
<dbReference type="neXtProt" id="NX_Q9UNZ2"/>
<dbReference type="OpenTargets" id="ENSG00000088833"/>
<dbReference type="PharmGKB" id="PA31794"/>
<dbReference type="VEuPathDB" id="HostDB:ENSG00000088833"/>
<dbReference type="eggNOG" id="KOG2086">
    <property type="taxonomic scope" value="Eukaryota"/>
</dbReference>
<dbReference type="GeneTree" id="ENSGT00520000055567"/>
<dbReference type="HOGENOM" id="CLU_029402_0_0_1"/>
<dbReference type="InParanoid" id="Q9UNZ2"/>
<dbReference type="OMA" id="NKDHTDK"/>
<dbReference type="OrthoDB" id="25887at2759"/>
<dbReference type="PAN-GO" id="Q9UNZ2">
    <property type="GO annotations" value="8 GO annotations based on evolutionary models"/>
</dbReference>
<dbReference type="PhylomeDB" id="Q9UNZ2"/>
<dbReference type="TreeFam" id="TF312973"/>
<dbReference type="PathwayCommons" id="Q9UNZ2"/>
<dbReference type="Reactome" id="R-HSA-9013407">
    <property type="pathway name" value="RHOH GTPase cycle"/>
</dbReference>
<dbReference type="SignaLink" id="Q9UNZ2"/>
<dbReference type="SIGNOR" id="Q9UNZ2"/>
<dbReference type="BioGRID-ORCS" id="55968">
    <property type="hits" value="55 hits in 1171 CRISPR screens"/>
</dbReference>
<dbReference type="CD-CODE" id="DEE660B4">
    <property type="entry name" value="Stress granule"/>
</dbReference>
<dbReference type="CD-CODE" id="FB4E32DD">
    <property type="entry name" value="Presynaptic clusters and postsynaptic densities"/>
</dbReference>
<dbReference type="ChiTaRS" id="NSFL1C">
    <property type="organism name" value="human"/>
</dbReference>
<dbReference type="EvolutionaryTrace" id="Q9UNZ2"/>
<dbReference type="GeneWiki" id="NSFL1C"/>
<dbReference type="GenomeRNAi" id="55968"/>
<dbReference type="Pharos" id="Q9UNZ2">
    <property type="development level" value="Tbio"/>
</dbReference>
<dbReference type="PRO" id="PR:Q9UNZ2"/>
<dbReference type="Proteomes" id="UP000005640">
    <property type="component" value="Chromosome 20"/>
</dbReference>
<dbReference type="RNAct" id="Q9UNZ2">
    <property type="molecule type" value="protein"/>
</dbReference>
<dbReference type="Bgee" id="ENSG00000088833">
    <property type="expression patterns" value="Expressed in right adrenal gland and 212 other cell types or tissues"/>
</dbReference>
<dbReference type="ExpressionAtlas" id="Q9UNZ2">
    <property type="expression patterns" value="baseline and differential"/>
</dbReference>
<dbReference type="GO" id="GO:0005813">
    <property type="term" value="C:centrosome"/>
    <property type="evidence" value="ECO:0007669"/>
    <property type="project" value="UniProtKB-SubCell"/>
</dbReference>
<dbReference type="GO" id="GO:0005694">
    <property type="term" value="C:chromosome"/>
    <property type="evidence" value="ECO:0007669"/>
    <property type="project" value="UniProtKB-SubCell"/>
</dbReference>
<dbReference type="GO" id="GO:0005737">
    <property type="term" value="C:cytoplasm"/>
    <property type="evidence" value="ECO:0000303"/>
    <property type="project" value="ComplexPortal"/>
</dbReference>
<dbReference type="GO" id="GO:0005829">
    <property type="term" value="C:cytosol"/>
    <property type="evidence" value="ECO:0000318"/>
    <property type="project" value="GO_Central"/>
</dbReference>
<dbReference type="GO" id="GO:0005795">
    <property type="term" value="C:Golgi stack"/>
    <property type="evidence" value="ECO:0007669"/>
    <property type="project" value="UniProtKB-SubCell"/>
</dbReference>
<dbReference type="GO" id="GO:0005634">
    <property type="term" value="C:nucleus"/>
    <property type="evidence" value="ECO:0000318"/>
    <property type="project" value="GO_Central"/>
</dbReference>
<dbReference type="GO" id="GO:1990730">
    <property type="term" value="C:VCP-NSFL1C complex"/>
    <property type="evidence" value="ECO:0000353"/>
    <property type="project" value="ComplexPortal"/>
</dbReference>
<dbReference type="GO" id="GO:0008289">
    <property type="term" value="F:lipid binding"/>
    <property type="evidence" value="ECO:0007669"/>
    <property type="project" value="UniProtKB-KW"/>
</dbReference>
<dbReference type="GO" id="GO:0043130">
    <property type="term" value="F:ubiquitin binding"/>
    <property type="evidence" value="ECO:0000318"/>
    <property type="project" value="GO_Central"/>
</dbReference>
<dbReference type="GO" id="GO:0000045">
    <property type="term" value="P:autophagosome assembly"/>
    <property type="evidence" value="ECO:0000318"/>
    <property type="project" value="GO_Central"/>
</dbReference>
<dbReference type="GO" id="GO:0000132">
    <property type="term" value="P:establishment of mitotic spindle orientation"/>
    <property type="evidence" value="ECO:0000316"/>
    <property type="project" value="UniProtKB"/>
</dbReference>
<dbReference type="GO" id="GO:0007030">
    <property type="term" value="P:Golgi organization"/>
    <property type="evidence" value="ECO:0000318"/>
    <property type="project" value="GO_Central"/>
</dbReference>
<dbReference type="GO" id="GO:0061025">
    <property type="term" value="P:membrane fusion"/>
    <property type="evidence" value="ECO:0000318"/>
    <property type="project" value="GO_Central"/>
</dbReference>
<dbReference type="GO" id="GO:1904780">
    <property type="term" value="P:negative regulation of protein localization to centrosome"/>
    <property type="evidence" value="ECO:0000316"/>
    <property type="project" value="UniProtKB"/>
</dbReference>
<dbReference type="GO" id="GO:0031468">
    <property type="term" value="P:nuclear membrane reassembly"/>
    <property type="evidence" value="ECO:0000318"/>
    <property type="project" value="GO_Central"/>
</dbReference>
<dbReference type="GO" id="GO:0046604">
    <property type="term" value="P:positive regulation of mitotic centrosome separation"/>
    <property type="evidence" value="ECO:0000316"/>
    <property type="project" value="UniProtKB"/>
</dbReference>
<dbReference type="GO" id="GO:0043161">
    <property type="term" value="P:proteasome-mediated ubiquitin-dependent protein catabolic process"/>
    <property type="evidence" value="ECO:0000318"/>
    <property type="project" value="GO_Central"/>
</dbReference>
<dbReference type="GO" id="GO:0006511">
    <property type="term" value="P:ubiquitin-dependent protein catabolic process"/>
    <property type="evidence" value="ECO:0000303"/>
    <property type="project" value="ComplexPortal"/>
</dbReference>
<dbReference type="CDD" id="cd14348">
    <property type="entry name" value="UBA_p47"/>
    <property type="match status" value="1"/>
</dbReference>
<dbReference type="CDD" id="cd17162">
    <property type="entry name" value="UBX_UBXN2C"/>
    <property type="match status" value="1"/>
</dbReference>
<dbReference type="FunFam" id="3.10.20.90:FF:000093">
    <property type="entry name" value="NSFL1 (P97) cofactor (P47)"/>
    <property type="match status" value="1"/>
</dbReference>
<dbReference type="FunFam" id="3.30.420.210:FF:000001">
    <property type="entry name" value="NSFL1 (P97) cofactor (P47)"/>
    <property type="match status" value="1"/>
</dbReference>
<dbReference type="FunFam" id="1.10.8.10:FF:000020">
    <property type="entry name" value="NSFL1 (p97) cofactor (p47)"/>
    <property type="match status" value="1"/>
</dbReference>
<dbReference type="Gene3D" id="1.10.8.10">
    <property type="entry name" value="DNA helicase RuvA subunit, C-terminal domain"/>
    <property type="match status" value="1"/>
</dbReference>
<dbReference type="Gene3D" id="3.10.20.90">
    <property type="entry name" value="Phosphatidylinositol 3-kinase Catalytic Subunit, Chain A, domain 1"/>
    <property type="match status" value="1"/>
</dbReference>
<dbReference type="Gene3D" id="3.30.420.210">
    <property type="entry name" value="SEP domain"/>
    <property type="match status" value="1"/>
</dbReference>
<dbReference type="InterPro" id="IPR036241">
    <property type="entry name" value="NSFL1C_SEP_dom_sf"/>
</dbReference>
<dbReference type="InterPro" id="IPR012989">
    <property type="entry name" value="SEP_domain"/>
</dbReference>
<dbReference type="InterPro" id="IPR009060">
    <property type="entry name" value="UBA-like_sf"/>
</dbReference>
<dbReference type="InterPro" id="IPR029071">
    <property type="entry name" value="Ubiquitin-like_domsf"/>
</dbReference>
<dbReference type="InterPro" id="IPR001012">
    <property type="entry name" value="UBX_dom"/>
</dbReference>
<dbReference type="PANTHER" id="PTHR23333:SF24">
    <property type="entry name" value="NSFL1 COFACTOR P47"/>
    <property type="match status" value="1"/>
</dbReference>
<dbReference type="PANTHER" id="PTHR23333">
    <property type="entry name" value="UBX DOMAIN CONTAINING PROTEIN"/>
    <property type="match status" value="1"/>
</dbReference>
<dbReference type="Pfam" id="PF08059">
    <property type="entry name" value="SEP"/>
    <property type="match status" value="1"/>
</dbReference>
<dbReference type="Pfam" id="PF14555">
    <property type="entry name" value="UBA_4"/>
    <property type="match status" value="1"/>
</dbReference>
<dbReference type="Pfam" id="PF00789">
    <property type="entry name" value="UBX"/>
    <property type="match status" value="1"/>
</dbReference>
<dbReference type="SMART" id="SM00553">
    <property type="entry name" value="SEP"/>
    <property type="match status" value="1"/>
</dbReference>
<dbReference type="SMART" id="SM00166">
    <property type="entry name" value="UBX"/>
    <property type="match status" value="1"/>
</dbReference>
<dbReference type="SUPFAM" id="SSF102848">
    <property type="entry name" value="NSFL1 (p97 ATPase) cofactor p47, SEP domain"/>
    <property type="match status" value="1"/>
</dbReference>
<dbReference type="SUPFAM" id="SSF46934">
    <property type="entry name" value="UBA-like"/>
    <property type="match status" value="1"/>
</dbReference>
<dbReference type="SUPFAM" id="SSF54236">
    <property type="entry name" value="Ubiquitin-like"/>
    <property type="match status" value="1"/>
</dbReference>
<dbReference type="PROSITE" id="PS51399">
    <property type="entry name" value="SEP"/>
    <property type="match status" value="1"/>
</dbReference>
<dbReference type="PROSITE" id="PS50033">
    <property type="entry name" value="UBX"/>
    <property type="match status" value="1"/>
</dbReference>
<feature type="chain" id="PRO_0000210988" description="NSFL1 cofactor p47">
    <location>
        <begin position="1"/>
        <end position="370"/>
    </location>
</feature>
<feature type="domain" description="SEP" evidence="5">
    <location>
        <begin position="179"/>
        <end position="244"/>
    </location>
</feature>
<feature type="domain" description="UBX" evidence="4">
    <location>
        <begin position="291"/>
        <end position="368"/>
    </location>
</feature>
<feature type="region of interest" description="Disordered" evidence="6">
    <location>
        <begin position="54"/>
        <end position="116"/>
    </location>
</feature>
<feature type="region of interest" description="Disordered" evidence="6">
    <location>
        <begin position="261"/>
        <end position="289"/>
    </location>
</feature>
<feature type="short sequence motif" description="Nuclear localization signal">
    <location>
        <begin position="109"/>
        <end position="115"/>
    </location>
</feature>
<feature type="short sequence motif" description="Nuclear localization signal">
    <location>
        <begin position="172"/>
        <end position="175"/>
    </location>
</feature>
<feature type="compositionally biased region" description="Polar residues" evidence="6">
    <location>
        <begin position="54"/>
        <end position="73"/>
    </location>
</feature>
<feature type="compositionally biased region" description="Polar residues" evidence="6">
    <location>
        <begin position="261"/>
        <end position="287"/>
    </location>
</feature>
<feature type="modified residue" description="Phosphoserine" evidence="20">
    <location>
        <position position="74"/>
    </location>
</feature>
<feature type="modified residue" description="Phosphoserine" evidence="20">
    <location>
        <position position="102"/>
    </location>
</feature>
<feature type="modified residue" description="Phosphoserine" evidence="13 14 16 17 18 19 20 21">
    <location>
        <position position="114"/>
    </location>
</feature>
<feature type="modified residue" description="Phosphoserine" evidence="15 20">
    <location>
        <position position="140"/>
    </location>
</feature>
<feature type="modified residue" description="Phosphotyrosine" evidence="3">
    <location>
        <position position="167"/>
    </location>
</feature>
<feature type="modified residue" description="Phosphoserine" evidence="3">
    <location>
        <position position="176"/>
    </location>
</feature>
<feature type="modified residue" description="Phosphoserine" evidence="20">
    <location>
        <position position="192"/>
    </location>
</feature>
<feature type="modified residue" description="Phosphoserine" evidence="15 17 18 20">
    <location>
        <position position="272"/>
    </location>
</feature>
<feature type="splice variant" id="VSP_041062" description="In isoform 4." evidence="10">
    <original>MAAERQEALREFVAVTGAEEDRARFFLESAGWDLQIALASFYEDGGDEDIVTISQATPSSVSRGTAPSDNRVTSFRDLIHDQDEDEEEEEGQRFYAGGSERSGQQIVGPPRKKSPNELVDDLFK</original>
    <variation>MTKMKMRRKRKAR</variation>
    <location>
        <begin position="1"/>
        <end position="124"/>
    </location>
</feature>
<feature type="splice variant" id="VSP_009262" description="In isoform 3." evidence="11">
    <original>R</original>
    <variation>RSR</variation>
    <location>
        <position position="93"/>
    </location>
</feature>
<feature type="splice variant" id="VSP_009263" description="In isoform 2." evidence="10">
    <location>
        <begin position="149"/>
        <end position="179"/>
    </location>
</feature>
<feature type="sequence variant" id="VAR_017481" description="In dbSNP:rs9575." evidence="7">
    <original>D</original>
    <variation>N</variation>
    <location>
        <position position="290"/>
    </location>
</feature>
<feature type="sequence conflict" description="In Ref. 1; AAP97139." evidence="12" ref="1">
    <original>AS</original>
    <variation>EL</variation>
    <location>
        <begin position="39"/>
        <end position="40"/>
    </location>
</feature>
<feature type="strand" evidence="22">
    <location>
        <begin position="171"/>
        <end position="173"/>
    </location>
</feature>
<feature type="strand" evidence="22">
    <location>
        <begin position="180"/>
        <end position="193"/>
    </location>
</feature>
<feature type="strand" evidence="22">
    <location>
        <begin position="198"/>
        <end position="200"/>
    </location>
</feature>
<feature type="turn" evidence="22">
    <location>
        <begin position="204"/>
        <end position="206"/>
    </location>
</feature>
<feature type="helix" evidence="22">
    <location>
        <begin position="207"/>
        <end position="215"/>
    </location>
</feature>
<feature type="helix" evidence="22">
    <location>
        <begin position="220"/>
        <end position="223"/>
    </location>
</feature>
<feature type="strand" evidence="22">
    <location>
        <begin position="231"/>
        <end position="239"/>
    </location>
</feature>
<feature type="strand" evidence="22">
    <location>
        <begin position="245"/>
        <end position="250"/>
    </location>
</feature>
<feature type="strand" evidence="22">
    <location>
        <begin position="255"/>
        <end position="259"/>
    </location>
</feature>
<feature type="helix" evidence="22">
    <location>
        <begin position="260"/>
        <end position="262"/>
    </location>
</feature>
<feature type="strand" evidence="22">
    <location>
        <begin position="265"/>
        <end position="268"/>
    </location>
</feature>
<feature type="strand" evidence="23">
    <location>
        <begin position="296"/>
        <end position="302"/>
    </location>
</feature>
<feature type="turn" evidence="23">
    <location>
        <begin position="303"/>
        <end position="306"/>
    </location>
</feature>
<feature type="strand" evidence="23">
    <location>
        <begin position="307"/>
        <end position="315"/>
    </location>
</feature>
<feature type="helix" evidence="23">
    <location>
        <begin position="318"/>
        <end position="328"/>
    </location>
</feature>
<feature type="helix" evidence="23">
    <location>
        <begin position="330"/>
        <end position="333"/>
    </location>
</feature>
<feature type="strand" evidence="23">
    <location>
        <begin position="337"/>
        <end position="341"/>
    </location>
</feature>
<feature type="turn" evidence="23">
    <location>
        <begin position="342"/>
        <end position="345"/>
    </location>
</feature>
<feature type="turn" evidence="23">
    <location>
        <begin position="355"/>
        <end position="359"/>
    </location>
</feature>
<feature type="strand" evidence="23">
    <location>
        <begin position="363"/>
        <end position="369"/>
    </location>
</feature>
<reference key="1">
    <citation type="submission" date="1998-08" db="EMBL/GenBank/DDBJ databases">
        <title>Cloning of a novel human cDNA homology to R.norvegicus p47 mRNA.</title>
        <authorList>
            <person name="Yue P."/>
            <person name="Yu L."/>
            <person name="Zhou Y."/>
            <person name="Zhao Y."/>
            <person name="Yang Y.M."/>
            <person name="Zhao S.Y."/>
        </authorList>
    </citation>
    <scope>NUCLEOTIDE SEQUENCE [MRNA] (ISOFORM 3)</scope>
</reference>
<reference key="2">
    <citation type="journal article" date="2000" name="Proc. Natl. Acad. Sci. U.S.A.">
        <title>Gene expression profiling in the human hypothalamus-pituitary-adrenal axis and full-length cDNA cloning.</title>
        <authorList>
            <person name="Hu R.-M."/>
            <person name="Han Z.-G."/>
            <person name="Song H.-D."/>
            <person name="Peng Y.-D."/>
            <person name="Huang Q.-H."/>
            <person name="Ren S.-X."/>
            <person name="Gu Y.-J."/>
            <person name="Huang C.-H."/>
            <person name="Li Y.-B."/>
            <person name="Jiang C.-L."/>
            <person name="Fu G."/>
            <person name="Zhang Q.-H."/>
            <person name="Gu B.-W."/>
            <person name="Dai M."/>
            <person name="Mao Y.-F."/>
            <person name="Gao G.-F."/>
            <person name="Rong R."/>
            <person name="Ye M."/>
            <person name="Zhou J."/>
            <person name="Xu S.-H."/>
            <person name="Gu J."/>
            <person name="Shi J.-X."/>
            <person name="Jin W.-R."/>
            <person name="Zhang C.-K."/>
            <person name="Wu T.-M."/>
            <person name="Huang G.-Y."/>
            <person name="Chen Z."/>
            <person name="Chen M.-D."/>
            <person name="Chen J.-L."/>
        </authorList>
    </citation>
    <scope>NUCLEOTIDE SEQUENCE [LARGE SCALE MRNA] (ISOFORM 1)</scope>
    <source>
        <tissue>Adrenal gland</tissue>
    </source>
</reference>
<reference key="3">
    <citation type="journal article" date="2000" name="Genome Res.">
        <title>Cloning and functional analysis of cDNAs with open reading frames for 300 previously undefined genes expressed in CD34+ hematopoietic stem/progenitor cells.</title>
        <authorList>
            <person name="Zhang Q.-H."/>
            <person name="Ye M."/>
            <person name="Wu X.-Y."/>
            <person name="Ren S.-X."/>
            <person name="Zhao M."/>
            <person name="Zhao C.-J."/>
            <person name="Fu G."/>
            <person name="Shen Y."/>
            <person name="Fan H.-Y."/>
            <person name="Lu G."/>
            <person name="Zhong M."/>
            <person name="Xu X.-R."/>
            <person name="Han Z.-G."/>
            <person name="Zhang J.-W."/>
            <person name="Tao J."/>
            <person name="Huang Q.-H."/>
            <person name="Zhou J."/>
            <person name="Hu G.-X."/>
            <person name="Gu J."/>
            <person name="Chen S.-J."/>
            <person name="Chen Z."/>
        </authorList>
    </citation>
    <scope>NUCLEOTIDE SEQUENCE [LARGE SCALE MRNA] (ISOFORM 1)</scope>
    <scope>VARIANT ASN-290</scope>
    <source>
        <tissue>Umbilical cord blood</tissue>
    </source>
</reference>
<reference key="4">
    <citation type="journal article" date="2004" name="Nat. Genet.">
        <title>Complete sequencing and characterization of 21,243 full-length human cDNAs.</title>
        <authorList>
            <person name="Ota T."/>
            <person name="Suzuki Y."/>
            <person name="Nishikawa T."/>
            <person name="Otsuki T."/>
            <person name="Sugiyama T."/>
            <person name="Irie R."/>
            <person name="Wakamatsu A."/>
            <person name="Hayashi K."/>
            <person name="Sato H."/>
            <person name="Nagai K."/>
            <person name="Kimura K."/>
            <person name="Makita H."/>
            <person name="Sekine M."/>
            <person name="Obayashi M."/>
            <person name="Nishi T."/>
            <person name="Shibahara T."/>
            <person name="Tanaka T."/>
            <person name="Ishii S."/>
            <person name="Yamamoto J."/>
            <person name="Saito K."/>
            <person name="Kawai Y."/>
            <person name="Isono Y."/>
            <person name="Nakamura Y."/>
            <person name="Nagahari K."/>
            <person name="Murakami K."/>
            <person name="Yasuda T."/>
            <person name="Iwayanagi T."/>
            <person name="Wagatsuma M."/>
            <person name="Shiratori A."/>
            <person name="Sudo H."/>
            <person name="Hosoiri T."/>
            <person name="Kaku Y."/>
            <person name="Kodaira H."/>
            <person name="Kondo H."/>
            <person name="Sugawara M."/>
            <person name="Takahashi M."/>
            <person name="Kanda K."/>
            <person name="Yokoi T."/>
            <person name="Furuya T."/>
            <person name="Kikkawa E."/>
            <person name="Omura Y."/>
            <person name="Abe K."/>
            <person name="Kamihara K."/>
            <person name="Katsuta N."/>
            <person name="Sato K."/>
            <person name="Tanikawa M."/>
            <person name="Yamazaki M."/>
            <person name="Ninomiya K."/>
            <person name="Ishibashi T."/>
            <person name="Yamashita H."/>
            <person name="Murakawa K."/>
            <person name="Fujimori K."/>
            <person name="Tanai H."/>
            <person name="Kimata M."/>
            <person name="Watanabe M."/>
            <person name="Hiraoka S."/>
            <person name="Chiba Y."/>
            <person name="Ishida S."/>
            <person name="Ono Y."/>
            <person name="Takiguchi S."/>
            <person name="Watanabe S."/>
            <person name="Yosida M."/>
            <person name="Hotuta T."/>
            <person name="Kusano J."/>
            <person name="Kanehori K."/>
            <person name="Takahashi-Fujii A."/>
            <person name="Hara H."/>
            <person name="Tanase T.-O."/>
            <person name="Nomura Y."/>
            <person name="Togiya S."/>
            <person name="Komai F."/>
            <person name="Hara R."/>
            <person name="Takeuchi K."/>
            <person name="Arita M."/>
            <person name="Imose N."/>
            <person name="Musashino K."/>
            <person name="Yuuki H."/>
            <person name="Oshima A."/>
            <person name="Sasaki N."/>
            <person name="Aotsuka S."/>
            <person name="Yoshikawa Y."/>
            <person name="Matsunawa H."/>
            <person name="Ichihara T."/>
            <person name="Shiohata N."/>
            <person name="Sano S."/>
            <person name="Moriya S."/>
            <person name="Momiyama H."/>
            <person name="Satoh N."/>
            <person name="Takami S."/>
            <person name="Terashima Y."/>
            <person name="Suzuki O."/>
            <person name="Nakagawa S."/>
            <person name="Senoh A."/>
            <person name="Mizoguchi H."/>
            <person name="Goto Y."/>
            <person name="Shimizu F."/>
            <person name="Wakebe H."/>
            <person name="Hishigaki H."/>
            <person name="Watanabe T."/>
            <person name="Sugiyama A."/>
            <person name="Takemoto M."/>
            <person name="Kawakami B."/>
            <person name="Yamazaki M."/>
            <person name="Watanabe K."/>
            <person name="Kumagai A."/>
            <person name="Itakura S."/>
            <person name="Fukuzumi Y."/>
            <person name="Fujimori Y."/>
            <person name="Komiyama M."/>
            <person name="Tashiro H."/>
            <person name="Tanigami A."/>
            <person name="Fujiwara T."/>
            <person name="Ono T."/>
            <person name="Yamada K."/>
            <person name="Fujii Y."/>
            <person name="Ozaki K."/>
            <person name="Hirao M."/>
            <person name="Ohmori Y."/>
            <person name="Kawabata A."/>
            <person name="Hikiji T."/>
            <person name="Kobatake N."/>
            <person name="Inagaki H."/>
            <person name="Ikema Y."/>
            <person name="Okamoto S."/>
            <person name="Okitani R."/>
            <person name="Kawakami T."/>
            <person name="Noguchi S."/>
            <person name="Itoh T."/>
            <person name="Shigeta K."/>
            <person name="Senba T."/>
            <person name="Matsumura K."/>
            <person name="Nakajima Y."/>
            <person name="Mizuno T."/>
            <person name="Morinaga M."/>
            <person name="Sasaki M."/>
            <person name="Togashi T."/>
            <person name="Oyama M."/>
            <person name="Hata H."/>
            <person name="Watanabe M."/>
            <person name="Komatsu T."/>
            <person name="Mizushima-Sugano J."/>
            <person name="Satoh T."/>
            <person name="Shirai Y."/>
            <person name="Takahashi Y."/>
            <person name="Nakagawa K."/>
            <person name="Okumura K."/>
            <person name="Nagase T."/>
            <person name="Nomura N."/>
            <person name="Kikuchi H."/>
            <person name="Masuho Y."/>
            <person name="Yamashita R."/>
            <person name="Nakai K."/>
            <person name="Yada T."/>
            <person name="Nakamura Y."/>
            <person name="Ohara O."/>
            <person name="Isogai T."/>
            <person name="Sugano S."/>
        </authorList>
    </citation>
    <scope>NUCLEOTIDE SEQUENCE [LARGE SCALE MRNA] (ISOFORMS 1; 2 AND 4)</scope>
    <source>
        <tissue>Brain</tissue>
    </source>
</reference>
<reference key="5">
    <citation type="journal article" date="2001" name="Nature">
        <title>The DNA sequence and comparative analysis of human chromosome 20.</title>
        <authorList>
            <person name="Deloukas P."/>
            <person name="Matthews L.H."/>
            <person name="Ashurst J.L."/>
            <person name="Burton J."/>
            <person name="Gilbert J.G.R."/>
            <person name="Jones M."/>
            <person name="Stavrides G."/>
            <person name="Almeida J.P."/>
            <person name="Babbage A.K."/>
            <person name="Bagguley C.L."/>
            <person name="Bailey J."/>
            <person name="Barlow K.F."/>
            <person name="Bates K.N."/>
            <person name="Beard L.M."/>
            <person name="Beare D.M."/>
            <person name="Beasley O.P."/>
            <person name="Bird C.P."/>
            <person name="Blakey S.E."/>
            <person name="Bridgeman A.M."/>
            <person name="Brown A.J."/>
            <person name="Buck D."/>
            <person name="Burrill W.D."/>
            <person name="Butler A.P."/>
            <person name="Carder C."/>
            <person name="Carter N.P."/>
            <person name="Chapman J.C."/>
            <person name="Clamp M."/>
            <person name="Clark G."/>
            <person name="Clark L.N."/>
            <person name="Clark S.Y."/>
            <person name="Clee C.M."/>
            <person name="Clegg S."/>
            <person name="Cobley V.E."/>
            <person name="Collier R.E."/>
            <person name="Connor R.E."/>
            <person name="Corby N.R."/>
            <person name="Coulson A."/>
            <person name="Coville G.J."/>
            <person name="Deadman R."/>
            <person name="Dhami P.D."/>
            <person name="Dunn M."/>
            <person name="Ellington A.G."/>
            <person name="Frankland J.A."/>
            <person name="Fraser A."/>
            <person name="French L."/>
            <person name="Garner P."/>
            <person name="Grafham D.V."/>
            <person name="Griffiths C."/>
            <person name="Griffiths M.N.D."/>
            <person name="Gwilliam R."/>
            <person name="Hall R.E."/>
            <person name="Hammond S."/>
            <person name="Harley J.L."/>
            <person name="Heath P.D."/>
            <person name="Ho S."/>
            <person name="Holden J.L."/>
            <person name="Howden P.J."/>
            <person name="Huckle E."/>
            <person name="Hunt A.R."/>
            <person name="Hunt S.E."/>
            <person name="Jekosch K."/>
            <person name="Johnson C.M."/>
            <person name="Johnson D."/>
            <person name="Kay M.P."/>
            <person name="Kimberley A.M."/>
            <person name="King A."/>
            <person name="Knights A."/>
            <person name="Laird G.K."/>
            <person name="Lawlor S."/>
            <person name="Lehvaeslaiho M.H."/>
            <person name="Leversha M.A."/>
            <person name="Lloyd C."/>
            <person name="Lloyd D.M."/>
            <person name="Lovell J.D."/>
            <person name="Marsh V.L."/>
            <person name="Martin S.L."/>
            <person name="McConnachie L.J."/>
            <person name="McLay K."/>
            <person name="McMurray A.A."/>
            <person name="Milne S.A."/>
            <person name="Mistry D."/>
            <person name="Moore M.J.F."/>
            <person name="Mullikin J.C."/>
            <person name="Nickerson T."/>
            <person name="Oliver K."/>
            <person name="Parker A."/>
            <person name="Patel R."/>
            <person name="Pearce T.A.V."/>
            <person name="Peck A.I."/>
            <person name="Phillimore B.J.C.T."/>
            <person name="Prathalingam S.R."/>
            <person name="Plumb R.W."/>
            <person name="Ramsay H."/>
            <person name="Rice C.M."/>
            <person name="Ross M.T."/>
            <person name="Scott C.E."/>
            <person name="Sehra H.K."/>
            <person name="Shownkeen R."/>
            <person name="Sims S."/>
            <person name="Skuce C.D."/>
            <person name="Smith M.L."/>
            <person name="Soderlund C."/>
            <person name="Steward C.A."/>
            <person name="Sulston J.E."/>
            <person name="Swann R.M."/>
            <person name="Sycamore N."/>
            <person name="Taylor R."/>
            <person name="Tee L."/>
            <person name="Thomas D.W."/>
            <person name="Thorpe A."/>
            <person name="Tracey A."/>
            <person name="Tromans A.C."/>
            <person name="Vaudin M."/>
            <person name="Wall M."/>
            <person name="Wallis J.M."/>
            <person name="Whitehead S.L."/>
            <person name="Whittaker P."/>
            <person name="Willey D.L."/>
            <person name="Williams L."/>
            <person name="Williams S.A."/>
            <person name="Wilming L."/>
            <person name="Wray P.W."/>
            <person name="Hubbard T."/>
            <person name="Durbin R.M."/>
            <person name="Bentley D.R."/>
            <person name="Beck S."/>
            <person name="Rogers J."/>
        </authorList>
    </citation>
    <scope>NUCLEOTIDE SEQUENCE [LARGE SCALE GENOMIC DNA]</scope>
</reference>
<reference key="6">
    <citation type="submission" date="2005-09" db="EMBL/GenBank/DDBJ databases">
        <authorList>
            <person name="Mural R.J."/>
            <person name="Istrail S."/>
            <person name="Sutton G.G."/>
            <person name="Florea L."/>
            <person name="Halpern A.L."/>
            <person name="Mobarry C.M."/>
            <person name="Lippert R."/>
            <person name="Walenz B."/>
            <person name="Shatkay H."/>
            <person name="Dew I."/>
            <person name="Miller J.R."/>
            <person name="Flanigan M.J."/>
            <person name="Edwards N.J."/>
            <person name="Bolanos R."/>
            <person name="Fasulo D."/>
            <person name="Halldorsson B.V."/>
            <person name="Hannenhalli S."/>
            <person name="Turner R."/>
            <person name="Yooseph S."/>
            <person name="Lu F."/>
            <person name="Nusskern D.R."/>
            <person name="Shue B.C."/>
            <person name="Zheng X.H."/>
            <person name="Zhong F."/>
            <person name="Delcher A.L."/>
            <person name="Huson D.H."/>
            <person name="Kravitz S.A."/>
            <person name="Mouchard L."/>
            <person name="Reinert K."/>
            <person name="Remington K.A."/>
            <person name="Clark A.G."/>
            <person name="Waterman M.S."/>
            <person name="Eichler E.E."/>
            <person name="Adams M.D."/>
            <person name="Hunkapiller M.W."/>
            <person name="Myers E.W."/>
            <person name="Venter J.C."/>
        </authorList>
    </citation>
    <scope>NUCLEOTIDE SEQUENCE [LARGE SCALE GENOMIC DNA]</scope>
</reference>
<reference key="7">
    <citation type="journal article" date="2004" name="Genome Res.">
        <title>The status, quality, and expansion of the NIH full-length cDNA project: the Mammalian Gene Collection (MGC).</title>
        <authorList>
            <consortium name="The MGC Project Team"/>
        </authorList>
    </citation>
    <scope>NUCLEOTIDE SEQUENCE [LARGE SCALE MRNA] (ISOFORM 1)</scope>
    <source>
        <tissue>Placenta</tissue>
    </source>
</reference>
<reference key="8">
    <citation type="submission" date="2008-12" db="UniProtKB">
        <authorList>
            <person name="Lubec G."/>
            <person name="Chen W.-Q."/>
            <person name="Sun Y."/>
        </authorList>
    </citation>
    <scope>PROTEIN SEQUENCE OF 11-22; 77-93; 114-124; 157-172; 189-214; 260-301 AND 357-368</scope>
    <scope>IDENTIFICATION BY MASS SPECTROMETRY</scope>
    <source>
        <tissue>Fetal brain cortex</tissue>
    </source>
</reference>
<reference key="9">
    <citation type="journal article" date="2006" name="Cell">
        <title>Global, in vivo, and site-specific phosphorylation dynamics in signaling networks.</title>
        <authorList>
            <person name="Olsen J.V."/>
            <person name="Blagoev B."/>
            <person name="Gnad F."/>
            <person name="Macek B."/>
            <person name="Kumar C."/>
            <person name="Mortensen P."/>
            <person name="Mann M."/>
        </authorList>
    </citation>
    <scope>PHOSPHORYLATION [LARGE SCALE ANALYSIS] AT SER-114</scope>
    <scope>IDENTIFICATION BY MASS SPECTROMETRY [LARGE SCALE ANALYSIS]</scope>
    <source>
        <tissue>Cervix carcinoma</tissue>
    </source>
</reference>
<reference key="10">
    <citation type="journal article" date="2008" name="J. Proteome Res.">
        <title>Phosphorylation analysis of primary human T lymphocytes using sequential IMAC and titanium oxide enrichment.</title>
        <authorList>
            <person name="Carrascal M."/>
            <person name="Ovelleiro D."/>
            <person name="Casas V."/>
            <person name="Gay M."/>
            <person name="Abian J."/>
        </authorList>
    </citation>
    <scope>PHOSPHORYLATION [LARGE SCALE ANALYSIS] AT SER-114</scope>
    <scope>IDENTIFICATION BY MASS SPECTROMETRY [LARGE SCALE ANALYSIS]</scope>
    <source>
        <tissue>T-cell</tissue>
    </source>
</reference>
<reference key="11">
    <citation type="journal article" date="2008" name="J. Proteome Res.">
        <title>Phosphoproteome of resting human platelets.</title>
        <authorList>
            <person name="Zahedi R.P."/>
            <person name="Lewandrowski U."/>
            <person name="Wiesner J."/>
            <person name="Wortelkamp S."/>
            <person name="Moebius J."/>
            <person name="Schuetz C."/>
            <person name="Walter U."/>
            <person name="Gambaryan S."/>
            <person name="Sickmann A."/>
        </authorList>
    </citation>
    <scope>PHOSPHORYLATION [LARGE SCALE ANALYSIS] AT SER-114</scope>
    <scope>IDENTIFICATION BY MASS SPECTROMETRY [LARGE SCALE ANALYSIS]</scope>
    <source>
        <tissue>Platelet</tissue>
    </source>
</reference>
<reference key="12">
    <citation type="journal article" date="2008" name="Proc. Natl. Acad. Sci. U.S.A.">
        <title>A quantitative atlas of mitotic phosphorylation.</title>
        <authorList>
            <person name="Dephoure N."/>
            <person name="Zhou C."/>
            <person name="Villen J."/>
            <person name="Beausoleil S.A."/>
            <person name="Bakalarski C.E."/>
            <person name="Elledge S.J."/>
            <person name="Gygi S.P."/>
        </authorList>
    </citation>
    <scope>PHOSPHORYLATION [LARGE SCALE ANALYSIS] AT SER-140 AND SER-272</scope>
    <scope>IDENTIFICATION BY MASS SPECTROMETRY [LARGE SCALE ANALYSIS]</scope>
    <source>
        <tissue>Cervix carcinoma</tissue>
    </source>
</reference>
<reference key="13">
    <citation type="journal article" date="2009" name="Anal. Chem.">
        <title>Lys-N and trypsin cover complementary parts of the phosphoproteome in a refined SCX-based approach.</title>
        <authorList>
            <person name="Gauci S."/>
            <person name="Helbig A.O."/>
            <person name="Slijper M."/>
            <person name="Krijgsveld J."/>
            <person name="Heck A.J."/>
            <person name="Mohammed S."/>
        </authorList>
    </citation>
    <scope>IDENTIFICATION BY MASS SPECTROMETRY [LARGE SCALE ANALYSIS]</scope>
</reference>
<reference key="14">
    <citation type="journal article" date="2009" name="Sci. Signal.">
        <title>Quantitative phosphoproteomic analysis of T cell receptor signaling reveals system-wide modulation of protein-protein interactions.</title>
        <authorList>
            <person name="Mayya V."/>
            <person name="Lundgren D.H."/>
            <person name="Hwang S.-I."/>
            <person name="Rezaul K."/>
            <person name="Wu L."/>
            <person name="Eng J.K."/>
            <person name="Rodionov V."/>
            <person name="Han D.K."/>
        </authorList>
    </citation>
    <scope>PHOSPHORYLATION [LARGE SCALE ANALYSIS] AT SER-114 AND SER-272</scope>
    <scope>IDENTIFICATION BY MASS SPECTROMETRY [LARGE SCALE ANALYSIS]</scope>
    <source>
        <tissue>Leukemic T-cell</tissue>
    </source>
</reference>
<reference key="15">
    <citation type="journal article" date="2010" name="Sci. Signal.">
        <title>Quantitative phosphoproteomics reveals widespread full phosphorylation site occupancy during mitosis.</title>
        <authorList>
            <person name="Olsen J.V."/>
            <person name="Vermeulen M."/>
            <person name="Santamaria A."/>
            <person name="Kumar C."/>
            <person name="Miller M.L."/>
            <person name="Jensen L.J."/>
            <person name="Gnad F."/>
            <person name="Cox J."/>
            <person name="Jensen T.S."/>
            <person name="Nigg E.A."/>
            <person name="Brunak S."/>
            <person name="Mann M."/>
        </authorList>
    </citation>
    <scope>PHOSPHORYLATION [LARGE SCALE ANALYSIS] AT SER-114 AND SER-272</scope>
    <scope>IDENTIFICATION BY MASS SPECTROMETRY [LARGE SCALE ANALYSIS]</scope>
    <source>
        <tissue>Cervix carcinoma</tissue>
    </source>
</reference>
<reference key="16">
    <citation type="journal article" date="2011" name="BMC Syst. Biol.">
        <title>Initial characterization of the human central proteome.</title>
        <authorList>
            <person name="Burkard T.R."/>
            <person name="Planyavsky M."/>
            <person name="Kaupe I."/>
            <person name="Breitwieser F.P."/>
            <person name="Buerckstuemmer T."/>
            <person name="Bennett K.L."/>
            <person name="Superti-Furga G."/>
            <person name="Colinge J."/>
        </authorList>
    </citation>
    <scope>IDENTIFICATION BY MASS SPECTROMETRY [LARGE SCALE ANALYSIS]</scope>
</reference>
<reference key="17">
    <citation type="journal article" date="2011" name="Sci. Signal.">
        <title>System-wide temporal characterization of the proteome and phosphoproteome of human embryonic stem cell differentiation.</title>
        <authorList>
            <person name="Rigbolt K.T."/>
            <person name="Prokhorova T.A."/>
            <person name="Akimov V."/>
            <person name="Henningsen J."/>
            <person name="Johansen P.T."/>
            <person name="Kratchmarova I."/>
            <person name="Kassem M."/>
            <person name="Mann M."/>
            <person name="Olsen J.V."/>
            <person name="Blagoev B."/>
        </authorList>
    </citation>
    <scope>PHOSPHORYLATION [LARGE SCALE ANALYSIS] AT SER-114</scope>
    <scope>IDENTIFICATION BY MASS SPECTROMETRY [LARGE SCALE ANALYSIS]</scope>
</reference>
<reference key="18">
    <citation type="journal article" date="2013" name="J. Cell Biol.">
        <title>The UBXN-2/p37/p47 adaptors of CDC-48/p97 regulate mitosis by limiting the centrosomal recruitment of Aurora A.</title>
        <authorList>
            <person name="Kress E."/>
            <person name="Schwager F."/>
            <person name="Holtackers R."/>
            <person name="Seiler J."/>
            <person name="Prodon F."/>
            <person name="Zanin E."/>
            <person name="Eiteneuer A."/>
            <person name="Toya M."/>
            <person name="Sugimoto A."/>
            <person name="Meyer H."/>
            <person name="Meraldi P."/>
            <person name="Gotta M."/>
        </authorList>
    </citation>
    <scope>FUNCTION</scope>
</reference>
<reference key="19">
    <citation type="journal article" date="2013" name="J. Proteome Res.">
        <title>Toward a comprehensive characterization of a human cancer cell phosphoproteome.</title>
        <authorList>
            <person name="Zhou H."/>
            <person name="Di Palma S."/>
            <person name="Preisinger C."/>
            <person name="Peng M."/>
            <person name="Polat A.N."/>
            <person name="Heck A.J."/>
            <person name="Mohammed S."/>
        </authorList>
    </citation>
    <scope>PHOSPHORYLATION [LARGE SCALE ANALYSIS] AT SER-74; SER-102; SER-114; SER-140; SER-192 AND SER-272</scope>
    <scope>IDENTIFICATION BY MASS SPECTROMETRY [LARGE SCALE ANALYSIS]</scope>
    <source>
        <tissue>Cervix carcinoma</tissue>
        <tissue>Erythroleukemia</tissue>
    </source>
</reference>
<reference key="20">
    <citation type="journal article" date="2014" name="J. Proteomics">
        <title>An enzyme assisted RP-RPLC approach for in-depth analysis of human liver phosphoproteome.</title>
        <authorList>
            <person name="Bian Y."/>
            <person name="Song C."/>
            <person name="Cheng K."/>
            <person name="Dong M."/>
            <person name="Wang F."/>
            <person name="Huang J."/>
            <person name="Sun D."/>
            <person name="Wang L."/>
            <person name="Ye M."/>
            <person name="Zou H."/>
        </authorList>
    </citation>
    <scope>PHOSPHORYLATION [LARGE SCALE ANALYSIS] AT SER-114</scope>
    <scope>IDENTIFICATION BY MASS SPECTROMETRY [LARGE SCALE ANALYSIS]</scope>
    <source>
        <tissue>Liver</tissue>
    </source>
</reference>
<reference key="21">
    <citation type="journal article" date="2004" name="FEBS Lett.">
        <title>The SEP domain of p47 acts as a reversible competitive inhibitor of cathepsin L.</title>
        <authorList>
            <person name="Soukenik M."/>
            <person name="Diehl A."/>
            <person name="Leidert M."/>
            <person name="Sievert V."/>
            <person name="Buessow K."/>
            <person name="Leitner D."/>
            <person name="Labudde D."/>
            <person name="Ball L.J."/>
            <person name="Lechner A."/>
            <person name="Naegler D.K."/>
            <person name="Oschkinat H."/>
        </authorList>
    </citation>
    <scope>STRUCTURE BY NMR OF 171-270</scope>
    <scope>FUNCTION</scope>
</reference>
<evidence type="ECO:0000250" key="1"/>
<evidence type="ECO:0000250" key="2">
    <source>
        <dbReference type="UniProtKB" id="O35987"/>
    </source>
</evidence>
<evidence type="ECO:0000250" key="3">
    <source>
        <dbReference type="UniProtKB" id="Q9CZ44"/>
    </source>
</evidence>
<evidence type="ECO:0000255" key="4">
    <source>
        <dbReference type="PROSITE-ProRule" id="PRU00215"/>
    </source>
</evidence>
<evidence type="ECO:0000255" key="5">
    <source>
        <dbReference type="PROSITE-ProRule" id="PRU00732"/>
    </source>
</evidence>
<evidence type="ECO:0000256" key="6">
    <source>
        <dbReference type="SAM" id="MobiDB-lite"/>
    </source>
</evidence>
<evidence type="ECO:0000269" key="7">
    <source>
    </source>
</evidence>
<evidence type="ECO:0000269" key="8">
    <source>
    </source>
</evidence>
<evidence type="ECO:0000269" key="9">
    <source>
    </source>
</evidence>
<evidence type="ECO:0000303" key="10">
    <source>
    </source>
</evidence>
<evidence type="ECO:0000303" key="11">
    <source ref="1"/>
</evidence>
<evidence type="ECO:0000305" key="12"/>
<evidence type="ECO:0007744" key="13">
    <source>
    </source>
</evidence>
<evidence type="ECO:0007744" key="14">
    <source>
    </source>
</evidence>
<evidence type="ECO:0007744" key="15">
    <source>
    </source>
</evidence>
<evidence type="ECO:0007744" key="16">
    <source>
    </source>
</evidence>
<evidence type="ECO:0007744" key="17">
    <source>
    </source>
</evidence>
<evidence type="ECO:0007744" key="18">
    <source>
    </source>
</evidence>
<evidence type="ECO:0007744" key="19">
    <source>
    </source>
</evidence>
<evidence type="ECO:0007744" key="20">
    <source>
    </source>
</evidence>
<evidence type="ECO:0007744" key="21">
    <source>
    </source>
</evidence>
<evidence type="ECO:0007829" key="22">
    <source>
        <dbReference type="PDB" id="1SS6"/>
    </source>
</evidence>
<evidence type="ECO:0007829" key="23">
    <source>
        <dbReference type="PDB" id="8HRZ"/>
    </source>
</evidence>
<keyword id="KW-0002">3D-structure</keyword>
<keyword id="KW-0025">Alternative splicing</keyword>
<keyword id="KW-0158">Chromosome</keyword>
<keyword id="KW-0963">Cytoplasm</keyword>
<keyword id="KW-0206">Cytoskeleton</keyword>
<keyword id="KW-0903">Direct protein sequencing</keyword>
<keyword id="KW-0333">Golgi apparatus</keyword>
<keyword id="KW-0446">Lipid-binding</keyword>
<keyword id="KW-0539">Nucleus</keyword>
<keyword id="KW-0597">Phosphoprotein</keyword>
<keyword id="KW-1267">Proteomics identification</keyword>
<keyword id="KW-1185">Reference proteome</keyword>
<organism>
    <name type="scientific">Homo sapiens</name>
    <name type="common">Human</name>
    <dbReference type="NCBI Taxonomy" id="9606"/>
    <lineage>
        <taxon>Eukaryota</taxon>
        <taxon>Metazoa</taxon>
        <taxon>Chordata</taxon>
        <taxon>Craniata</taxon>
        <taxon>Vertebrata</taxon>
        <taxon>Euteleostomi</taxon>
        <taxon>Mammalia</taxon>
        <taxon>Eutheria</taxon>
        <taxon>Euarchontoglires</taxon>
        <taxon>Primates</taxon>
        <taxon>Haplorrhini</taxon>
        <taxon>Catarrhini</taxon>
        <taxon>Hominidae</taxon>
        <taxon>Homo</taxon>
    </lineage>
</organism>
<accession>Q9UNZ2</accession>
<accession>A2A2L1</accession>
<accession>B2RD74</accession>
<accession>Q5JXA4</accession>
<accession>Q5JXA5</accession>
<accession>Q7Z533</accession>
<accession>Q9H102</accession>
<accession>Q9NVL9</accession>
<accession>Q9UI06</accession>
<protein>
    <recommendedName>
        <fullName>NSFL1 cofactor p47</fullName>
    </recommendedName>
    <alternativeName>
        <fullName>UBX domain-containing protein 2C</fullName>
    </alternativeName>
    <alternativeName>
        <fullName>p97 cofactor p47</fullName>
    </alternativeName>
</protein>